<evidence type="ECO:0000250" key="1">
    <source>
        <dbReference type="UniProtKB" id="O57286"/>
    </source>
</evidence>
<evidence type="ECO:0000250" key="2">
    <source>
        <dbReference type="UniProtKB" id="P04851"/>
    </source>
</evidence>
<evidence type="ECO:0000250" key="3">
    <source>
        <dbReference type="UniProtKB" id="P06159"/>
    </source>
</evidence>
<evidence type="ECO:0000250" key="4">
    <source>
        <dbReference type="UniProtKB" id="P0DXN6"/>
    </source>
</evidence>
<evidence type="ECO:0000250" key="5">
    <source>
        <dbReference type="UniProtKB" id="P10050"/>
    </source>
</evidence>
<evidence type="ECO:0000250" key="6">
    <source>
        <dbReference type="UniProtKB" id="Q07097"/>
    </source>
</evidence>
<evidence type="ECO:0000250" key="7">
    <source>
        <dbReference type="UniProtKB" id="Q77M43"/>
    </source>
</evidence>
<evidence type="ECO:0000250" key="8">
    <source>
        <dbReference type="UniProtKB" id="Q9WMB5"/>
    </source>
</evidence>
<evidence type="ECO:0000256" key="9">
    <source>
        <dbReference type="SAM" id="MobiDB-lite"/>
    </source>
</evidence>
<evidence type="ECO:0000305" key="10"/>
<accession>P0DXN7</accession>
<accession>O92927</accession>
<accession>Q77M21</accession>
<accession>Q77M26</accession>
<accession>Q77M32</accession>
<accession>Q783Q8</accession>
<accession>Q83520</accession>
<accession>Q83523</accession>
<accession>Q83526</accession>
<accession>Q83726</accession>
<accession>Q89890</accession>
<accession>Q89933</accession>
<accession>Q91QN7</accession>
<accession>Q9IC39</accession>
<comment type="function">
    <text evidence="3 4 5 8">Forms the helical nucleocapsid (NC) in a ratio of 1 N per 6 ribonucleotides, protecting the genome from nucleases (By similarity). The nucleocapsid (NC) has a helical structure with either 12.35 or 11.64 N per turn, approximately 20 nm in diameter, with a hollow central cavity approximately 5 nm in diameter (By similarity). The encapsidated genomic RNA serves as template for transcription and replication; encapsidation by N is coupled to RNA synthesis (By similarity). Forms the encapsidation complex with the phosphoprotein protein P (By similarity). Before encapsidation, the newly synthesized free N protein, so-called N0, is chaperoned by P (By similarity). Participates, together with P, in the formation of viral factories (viroplasms), which are large inclusions in the host cytoplasm where replication takes place (By similarity). N is released in the blood following lysis of measles infected cells, it interacts then with human FCGR2B on immune cells, inducing apoptosis and blocking inflammatory immune response (By similarity).</text>
</comment>
<comment type="subunit">
    <text evidence="1 3 4 6 7 8">Homomultimer; forms the nucleocapsid (By similarity). Binds to viral genomic RNA (By similarity). N0 interacts (via Ncore) with the phosphoprotein (via N-terminus); this interaction allows P to chaperon N0 to avoid N polymerization and non-specific RNA binding before encapsidation (By similarity). Interacts (via the Ntail) as N-RNA template with the phosphoprotein (via C-terminus XD); this interaction maintains the P/L complex anchored to the nucleocapsid template during the sequential transcription (By similarity). Interacts with the phosphoprotein; this interaction leads to the formation of membraneless organelles that function as viral replication factories (By similarity). Interacts with human FCGR2B protein (By similarity). Interacts with human PPIA/CYPA and PPIB/CYPB (By similarity).</text>
</comment>
<comment type="subcellular location">
    <subcellularLocation>
        <location evidence="2">Virion</location>
    </subcellularLocation>
    <subcellularLocation>
        <location evidence="2">Host cytoplasm</location>
    </subcellularLocation>
    <subcellularLocation>
        <location evidence="2">Host nucleus</location>
    </subcellularLocation>
</comment>
<comment type="domain">
    <text evidence="4">Ncore is globular and carries regions required for N self-assembly and RNA-binding. Ntail is an intrinsically disordered monomeric domain in the C-terminus.</text>
</comment>
<comment type="PTM">
    <text evidence="8">Phosphorylation at Thr-279 is required for the formation of the nucleocapsid.</text>
</comment>
<comment type="similarity">
    <text evidence="10">Belongs to the paramyxoviruses nucleocapsid family.</text>
</comment>
<comment type="caution">
    <text evidence="4">The strains used in this publication turn out to be Edmonston strain viruses, contrasting with their claimed origin from reconsituted measles virus genomic cDNAs containing a genetic tag.</text>
</comment>
<feature type="chain" id="PRO_0000461181" description="Nucleoprotein">
    <location>
        <begin position="1"/>
        <end position="525"/>
    </location>
</feature>
<feature type="region of interest" description="Ncore" evidence="3">
    <location>
        <begin position="1"/>
        <end position="403"/>
    </location>
</feature>
<feature type="region of interest" description="RNA packaging and organization of the helical nucleocapsid" evidence="4">
    <location>
        <begin position="1"/>
        <end position="375"/>
    </location>
</feature>
<feature type="region of interest" description="Homomultimerization" evidence="5">
    <location>
        <begin position="1"/>
        <end position="36"/>
    </location>
</feature>
<feature type="region of interest" description="Homomultimerization" evidence="5">
    <location>
        <begin position="373"/>
        <end position="391"/>
    </location>
</feature>
<feature type="region of interest" description="Ntail" evidence="3">
    <location>
        <begin position="404"/>
        <end position="525"/>
    </location>
</feature>
<feature type="region of interest" description="Disordered" evidence="9">
    <location>
        <begin position="418"/>
        <end position="525"/>
    </location>
</feature>
<feature type="region of interest" description="Interaction with the phosphoprotein" evidence="7">
    <location>
        <begin position="477"/>
        <end position="505"/>
    </location>
</feature>
<feature type="short sequence motif" description="Nuclear localization signal" evidence="2">
    <location>
        <begin position="70"/>
        <end position="77"/>
    </location>
</feature>
<feature type="short sequence motif" description="Nuclear export signal" evidence="2">
    <location>
        <begin position="425"/>
        <end position="440"/>
    </location>
</feature>
<feature type="compositionally biased region" description="Basic and acidic residues" evidence="9">
    <location>
        <begin position="433"/>
        <end position="452"/>
    </location>
</feature>
<feature type="binding site" evidence="7">
    <location>
        <position position="180"/>
    </location>
    <ligand>
        <name>RNA</name>
        <dbReference type="ChEBI" id="CHEBI:33697"/>
    </ligand>
</feature>
<feature type="binding site" evidence="7">
    <location>
        <position position="195"/>
    </location>
    <ligand>
        <name>RNA</name>
        <dbReference type="ChEBI" id="CHEBI:33697"/>
    </ligand>
</feature>
<feature type="binding site" evidence="7">
    <location>
        <position position="202"/>
    </location>
    <ligand>
        <name>RNA</name>
        <dbReference type="ChEBI" id="CHEBI:33697"/>
    </ligand>
</feature>
<feature type="binding site" evidence="7">
    <location>
        <position position="260"/>
    </location>
    <ligand>
        <name>RNA</name>
        <dbReference type="ChEBI" id="CHEBI:33697"/>
    </ligand>
</feature>
<feature type="binding site" evidence="7">
    <location>
        <position position="351"/>
    </location>
    <ligand>
        <name>RNA</name>
        <dbReference type="ChEBI" id="CHEBI:33697"/>
    </ligand>
</feature>
<feature type="modified residue" description="Phosphothreonine; by host" evidence="8">
    <location>
        <position position="279"/>
    </location>
</feature>
<feature type="sequence variant">
    <original>L</original>
    <variation>S</variation>
    <location>
        <position position="58"/>
    </location>
</feature>
<feature type="sequence variant">
    <original>Q</original>
    <variation>K</variation>
    <location>
        <position position="129"/>
    </location>
</feature>
<feature type="sequence variant">
    <original>I</original>
    <variation>S</variation>
    <location>
        <position position="137"/>
    </location>
</feature>
<feature type="sequence variant">
    <original>E</original>
    <variation>G</variation>
    <location>
        <position position="148"/>
    </location>
</feature>
<feature type="sequence variant">
    <original>V</original>
    <variation>G</variation>
    <location>
        <position position="262"/>
    </location>
</feature>
<feature type="sequence variant">
    <original>K</original>
    <variation>R</variation>
    <location>
        <position position="405"/>
    </location>
</feature>
<feature type="sequence variant">
    <original>G</original>
    <variation>A</variation>
    <location>
        <position position="434"/>
    </location>
</feature>
<feature type="sequence variant">
    <original>R</original>
    <variation>G</variation>
    <location>
        <position position="448"/>
    </location>
</feature>
<feature type="sequence variant">
    <original>A</original>
    <variation>T</variation>
    <location>
        <position position="465"/>
    </location>
</feature>
<feature type="sequence variant">
    <original>D</original>
    <variation>A</variation>
    <location>
        <position position="474"/>
    </location>
</feature>
<feature type="sequence variant">
    <original>A</original>
    <variation>V</variation>
    <location>
        <position position="478"/>
    </location>
</feature>
<feature type="sequence variant">
    <original>S</original>
    <variation>T</variation>
    <location>
        <position position="479"/>
    </location>
</feature>
<feature type="sequence variant">
    <original>Q</original>
    <variation>L</variation>
    <location>
        <position position="483"/>
    </location>
</feature>
<feature type="sequence variant">
    <original>D</original>
    <variation>G</variation>
    <location>
        <position position="487"/>
    </location>
</feature>
<feature type="sequence variant">
    <original>DA</original>
    <variation>EP</variation>
    <location>
        <begin position="493"/>
        <end position="494"/>
    </location>
</feature>
<feature type="sequence variant">
    <original>I</original>
    <variation>R</variation>
    <location>
        <position position="516"/>
    </location>
</feature>
<feature type="sequence variant">
    <original>R</original>
    <variation>G</variation>
    <location>
        <position position="521"/>
    </location>
</feature>
<feature type="sequence variant">
    <original>N</original>
    <variation>D</variation>
    <location>
        <position position="522"/>
    </location>
</feature>
<reference key="1">
    <citation type="submission" date="2003-11" db="EMBL/GenBank/DDBJ databases">
        <authorList>
            <person name="Baricevic M."/>
            <person name="Forcic D."/>
            <person name="Kosutic Gulija T."/>
            <person name="Jug R."/>
            <person name="Mazuran R."/>
        </authorList>
    </citation>
    <scope>NUCLEOTIDE SEQUENCE [GENOMIC RNA]</scope>
    <source>
        <strain>Isolate EZD22</strain>
        <strain>Isolate EZD24 2/99</strain>
    </source>
</reference>
<reference key="2">
    <citation type="journal article" date="2001" name="J. Virol.">
        <title>Comparison of predicted amino acid sequences of measles virus strains in the Edmonston vaccine lineage.</title>
        <authorList>
            <person name="Parks C.L."/>
            <person name="Lerch R.A."/>
            <person name="Walpita P."/>
            <person name="Wang H.P."/>
            <person name="Sidhu M.S."/>
            <person name="Udem S.A."/>
        </authorList>
    </citation>
    <scope>NUCLEOTIDE SEQUENCE [GENOMIC RNA]</scope>
</reference>
<dbReference type="EMBL" id="AF266290">
    <property type="protein sequence ID" value="AAF85691.1"/>
    <property type="molecule type" value="Genomic_RNA"/>
</dbReference>
<dbReference type="EMBL" id="AY486083">
    <property type="protein sequence ID" value="AAR32652.1"/>
    <property type="molecule type" value="Genomic_RNA"/>
</dbReference>
<dbReference type="EMBL" id="AY486084">
    <property type="protein sequence ID" value="AAR32660.1"/>
    <property type="molecule type" value="Genomic_RNA"/>
</dbReference>
<dbReference type="PIR" id="A49601">
    <property type="entry name" value="A49601"/>
</dbReference>
<dbReference type="SMR" id="P0DXN7"/>
<dbReference type="Proteomes" id="UP000116098">
    <property type="component" value="Genome"/>
</dbReference>
<dbReference type="Proteomes" id="UP000132095">
    <property type="component" value="Genome"/>
</dbReference>
<dbReference type="Proteomes" id="UP000133043">
    <property type="component" value="Genome"/>
</dbReference>
<dbReference type="GO" id="GO:0019029">
    <property type="term" value="C:helical viral capsid"/>
    <property type="evidence" value="ECO:0007669"/>
    <property type="project" value="UniProtKB-KW"/>
</dbReference>
<dbReference type="GO" id="GO:0030430">
    <property type="term" value="C:host cell cytoplasm"/>
    <property type="evidence" value="ECO:0007669"/>
    <property type="project" value="UniProtKB-SubCell"/>
</dbReference>
<dbReference type="GO" id="GO:0042025">
    <property type="term" value="C:host cell nucleus"/>
    <property type="evidence" value="ECO:0007669"/>
    <property type="project" value="UniProtKB-SubCell"/>
</dbReference>
<dbReference type="GO" id="GO:1990904">
    <property type="term" value="C:ribonucleoprotein complex"/>
    <property type="evidence" value="ECO:0007669"/>
    <property type="project" value="UniProtKB-KW"/>
</dbReference>
<dbReference type="GO" id="GO:0019013">
    <property type="term" value="C:viral nucleocapsid"/>
    <property type="evidence" value="ECO:0007669"/>
    <property type="project" value="UniProtKB-KW"/>
</dbReference>
<dbReference type="GO" id="GO:0003723">
    <property type="term" value="F:RNA binding"/>
    <property type="evidence" value="ECO:0007669"/>
    <property type="project" value="UniProtKB-KW"/>
</dbReference>
<dbReference type="GO" id="GO:0005198">
    <property type="term" value="F:structural molecule activity"/>
    <property type="evidence" value="ECO:0007669"/>
    <property type="project" value="InterPro"/>
</dbReference>
<dbReference type="InterPro" id="IPR002021">
    <property type="entry name" value="Paramyx_ncap"/>
</dbReference>
<dbReference type="Pfam" id="PF00973">
    <property type="entry name" value="Paramyxo_ncap"/>
    <property type="match status" value="1"/>
</dbReference>
<keyword id="KW-0167">Capsid protein</keyword>
<keyword id="KW-1139">Helical capsid protein</keyword>
<keyword id="KW-1035">Host cytoplasm</keyword>
<keyword id="KW-1048">Host nucleus</keyword>
<keyword id="KW-0945">Host-virus interaction</keyword>
<keyword id="KW-0597">Phosphoprotein</keyword>
<keyword id="KW-0687">Ribonucleoprotein</keyword>
<keyword id="KW-0694">RNA-binding</keyword>
<keyword id="KW-0543">Viral nucleoprotein</keyword>
<keyword id="KW-0946">Virion</keyword>
<name>NCAP_MEASZ</name>
<gene>
    <name type="primary">N</name>
    <name type="synonym">NP</name>
</gene>
<sequence length="525" mass="58131">MATLLRSLALFKRNKDKPPITSGSGGAIRGIKHIIIVPIPGDSSITTRSRLLDRLVRLIGNPDVSGPKLTGALIGILSLFVESPGQLIQRITDDPDVSIRLLEVVQSDQSQSGLTFASRGTNMEDEADQYFSHDDPISSDQSRFGWFENKEISDIEVQDPEGFNMILGTILAQIWVLLAKAVTAPDTAADSELRRWIKYTQQRRVVGEFRLERKWLDVVRNRIAEDLSLRRFMVALILDIKRTPGNKPRIAEMICDIDTYIVEAGLASFILTIKFGIETMYPALGLHEFAGELSTLESLMNLYQQMGETAPYMVILENSIQNKFSAGSYPLLWSYAMGVGVELENSMGGLNFGRSYFDPAYFRLGQEMVRRSAGKVSSTLASELGITAEDARLVSEIAMHTTEDKISRAVGPRQAQVSFLHGDQSENELPRLGGKEDRRVKQSRGEARESYRETGPSRASDARAAHLPTGTPLDIDTASESSQDPQDSRRSADALLRLQAMAGISEEQGSDTDTPIVYNDRNLLD</sequence>
<proteinExistence type="inferred from homology"/>
<organism>
    <name type="scientific">Measles virus (strain Edmonston-Zagreb vaccine)</name>
    <name type="common">MeV</name>
    <name type="synonym">Subacute sclerose panencephalitis virus</name>
    <dbReference type="NCBI Taxonomy" id="70149"/>
    <lineage>
        <taxon>Viruses</taxon>
        <taxon>Riboviria</taxon>
        <taxon>Orthornavirae</taxon>
        <taxon>Negarnaviricota</taxon>
        <taxon>Haploviricotina</taxon>
        <taxon>Monjiviricetes</taxon>
        <taxon>Mononegavirales</taxon>
        <taxon>Paramyxoviridae</taxon>
        <taxon>Orthoparamyxovirinae</taxon>
        <taxon>Morbillivirus</taxon>
        <taxon>Morbillivirus hominis</taxon>
        <taxon>Measles morbillivirus</taxon>
    </lineage>
</organism>
<organismHost>
    <name type="scientific">Homo sapiens</name>
    <name type="common">Human</name>
    <dbReference type="NCBI Taxonomy" id="9606"/>
</organismHost>
<protein>
    <recommendedName>
        <fullName>Nucleoprotein</fullName>
    </recommendedName>
    <alternativeName>
        <fullName>Nucleocapsid protein</fullName>
        <shortName>NP</shortName>
        <shortName>Protein N</shortName>
    </alternativeName>
</protein>